<keyword id="KW-0007">Acetylation</keyword>
<keyword id="KW-1017">Isopeptide bond</keyword>
<keyword id="KW-0507">mRNA processing</keyword>
<keyword id="KW-0508">mRNA splicing</keyword>
<keyword id="KW-0539">Nucleus</keyword>
<keyword id="KW-0597">Phosphoprotein</keyword>
<keyword id="KW-1185">Reference proteome</keyword>
<keyword id="KW-0747">Spliceosome</keyword>
<keyword id="KW-0832">Ubl conjugation</keyword>
<gene>
    <name evidence="1" type="primary">MFAP1</name>
</gene>
<sequence length="439" mass="51977">MSVPSSLMKQPPIQSTAGAVPVRNEKGEISMEKVKVKRYVSGKRPDYAPMESSDEEDEEFQFIKKAKEQEAEPEEQEEDSSSDPRLRRLQNRISEDVEERLARHRKIVEPEVVGESDSEVEGDPWRMEREDSSEEEEEEIDEEEIERRRGMMRQRAQERKNEELEVMEVEDEGRSGEESESESEYEEYTDSEDEMEPRLKPVFIRKKDRVTVQEREAEALKQKELEQEAKHMAEERRKYTLKIVEEETKKELEENKRSLAALDALNTDDENDEEEYEAWKVRELKRIKRDREDREALEKEKAEIERMRNLTEEERRAELRANGKVITNKAVKGKYKFLQKYYHRGAFFMDEDEEVYKRDFSAPTLEDHFNKTILPKVMQVKNFGRSGRTKYTHLVDQDTTSFDSAWGQESAQNTKFFKQKAAGVRDVFERPSAKKRKTT</sequence>
<name>MFAP1_BOVIN</name>
<accession>Q5EA98</accession>
<proteinExistence type="evidence at transcript level"/>
<dbReference type="EMBL" id="BT020671">
    <property type="protein sequence ID" value="AAX08688.1"/>
    <property type="molecule type" value="mRNA"/>
</dbReference>
<dbReference type="RefSeq" id="NP_001029569.1">
    <property type="nucleotide sequence ID" value="NM_001034397.1"/>
</dbReference>
<dbReference type="SMR" id="Q5EA98"/>
<dbReference type="FunCoup" id="Q5EA98">
    <property type="interactions" value="3958"/>
</dbReference>
<dbReference type="STRING" id="9913.ENSBTAP00000022877"/>
<dbReference type="PaxDb" id="9913-ENSBTAP00000022877"/>
<dbReference type="PeptideAtlas" id="Q5EA98"/>
<dbReference type="Ensembl" id="ENSBTAT00000022877.4">
    <property type="protein sequence ID" value="ENSBTAP00000022877.2"/>
    <property type="gene ID" value="ENSBTAG00000017213.4"/>
</dbReference>
<dbReference type="GeneID" id="510905"/>
<dbReference type="KEGG" id="bta:510905"/>
<dbReference type="CTD" id="4236"/>
<dbReference type="VEuPathDB" id="HostDB:ENSBTAG00000017213"/>
<dbReference type="VGNC" id="VGNC:31421">
    <property type="gene designation" value="MFAP1"/>
</dbReference>
<dbReference type="eggNOG" id="KOG1425">
    <property type="taxonomic scope" value="Eukaryota"/>
</dbReference>
<dbReference type="GeneTree" id="ENSGT00690000102225"/>
<dbReference type="HOGENOM" id="CLU_023077_1_0_1"/>
<dbReference type="InParanoid" id="Q5EA98"/>
<dbReference type="OMA" id="FHNERAG"/>
<dbReference type="OrthoDB" id="1111734at2759"/>
<dbReference type="TreeFam" id="TF314398"/>
<dbReference type="Reactome" id="R-BTA-72163">
    <property type="pathway name" value="mRNA Splicing - Major Pathway"/>
</dbReference>
<dbReference type="Proteomes" id="UP000009136">
    <property type="component" value="Chromosome 21"/>
</dbReference>
<dbReference type="Bgee" id="ENSBTAG00000017213">
    <property type="expression patterns" value="Expressed in milk and 104 other cell types or tissues"/>
</dbReference>
<dbReference type="GO" id="GO:0005813">
    <property type="term" value="C:centrosome"/>
    <property type="evidence" value="ECO:0007669"/>
    <property type="project" value="Ensembl"/>
</dbReference>
<dbReference type="GO" id="GO:0001527">
    <property type="term" value="C:microfibril"/>
    <property type="evidence" value="ECO:0007669"/>
    <property type="project" value="Ensembl"/>
</dbReference>
<dbReference type="GO" id="GO:0005654">
    <property type="term" value="C:nucleoplasm"/>
    <property type="evidence" value="ECO:0007669"/>
    <property type="project" value="Ensembl"/>
</dbReference>
<dbReference type="GO" id="GO:0005634">
    <property type="term" value="C:nucleus"/>
    <property type="evidence" value="ECO:0000250"/>
    <property type="project" value="UniProtKB"/>
</dbReference>
<dbReference type="GO" id="GO:0071005">
    <property type="term" value="C:U2-type precatalytic spliceosome"/>
    <property type="evidence" value="ECO:0000250"/>
    <property type="project" value="UniProtKB"/>
</dbReference>
<dbReference type="GO" id="GO:0005684">
    <property type="term" value="C:U2-type spliceosomal complex"/>
    <property type="evidence" value="ECO:0000318"/>
    <property type="project" value="GO_Central"/>
</dbReference>
<dbReference type="GO" id="GO:0000398">
    <property type="term" value="P:mRNA splicing, via spliceosome"/>
    <property type="evidence" value="ECO:0000250"/>
    <property type="project" value="UniProtKB"/>
</dbReference>
<dbReference type="InterPro" id="IPR033194">
    <property type="entry name" value="MFAP1"/>
</dbReference>
<dbReference type="InterPro" id="IPR009730">
    <property type="entry name" value="MFAP1_C"/>
</dbReference>
<dbReference type="PANTHER" id="PTHR15327">
    <property type="entry name" value="MICROFIBRIL-ASSOCIATED PROTEIN"/>
    <property type="match status" value="1"/>
</dbReference>
<dbReference type="Pfam" id="PF06991">
    <property type="entry name" value="MFAP1"/>
    <property type="match status" value="1"/>
</dbReference>
<reference key="1">
    <citation type="journal article" date="2005" name="BMC Genomics">
        <title>Characterization of 954 bovine full-CDS cDNA sequences.</title>
        <authorList>
            <person name="Harhay G.P."/>
            <person name="Sonstegard T.S."/>
            <person name="Keele J.W."/>
            <person name="Heaton M.P."/>
            <person name="Clawson M.L."/>
            <person name="Snelling W.M."/>
            <person name="Wiedmann R.T."/>
            <person name="Van Tassell C.P."/>
            <person name="Smith T.P.L."/>
        </authorList>
    </citation>
    <scope>NUCLEOTIDE SEQUENCE [LARGE SCALE MRNA]</scope>
</reference>
<feature type="initiator methionine" description="Removed" evidence="1">
    <location>
        <position position="1"/>
    </location>
</feature>
<feature type="chain" id="PRO_0000269915" description="Microfibrillar-associated protein 1">
    <location>
        <begin position="2"/>
        <end position="439"/>
    </location>
</feature>
<feature type="region of interest" description="Disordered" evidence="2">
    <location>
        <begin position="1"/>
        <end position="200"/>
    </location>
</feature>
<feature type="compositionally biased region" description="Polar residues" evidence="2">
    <location>
        <begin position="1"/>
        <end position="17"/>
    </location>
</feature>
<feature type="compositionally biased region" description="Basic and acidic residues" evidence="2">
    <location>
        <begin position="23"/>
        <end position="34"/>
    </location>
</feature>
<feature type="compositionally biased region" description="Basic and acidic residues" evidence="2">
    <location>
        <begin position="61"/>
        <end position="70"/>
    </location>
</feature>
<feature type="compositionally biased region" description="Acidic residues" evidence="2">
    <location>
        <begin position="71"/>
        <end position="81"/>
    </location>
</feature>
<feature type="compositionally biased region" description="Acidic residues" evidence="2">
    <location>
        <begin position="112"/>
        <end position="122"/>
    </location>
</feature>
<feature type="compositionally biased region" description="Acidic residues" evidence="2">
    <location>
        <begin position="131"/>
        <end position="144"/>
    </location>
</feature>
<feature type="compositionally biased region" description="Basic and acidic residues" evidence="2">
    <location>
        <begin position="145"/>
        <end position="163"/>
    </location>
</feature>
<feature type="compositionally biased region" description="Acidic residues" evidence="2">
    <location>
        <begin position="178"/>
        <end position="195"/>
    </location>
</feature>
<feature type="modified residue" description="N-acetylserine" evidence="1">
    <location>
        <position position="2"/>
    </location>
</feature>
<feature type="modified residue" description="Phosphoserine" evidence="1">
    <location>
        <position position="52"/>
    </location>
</feature>
<feature type="modified residue" description="Phosphoserine" evidence="1">
    <location>
        <position position="53"/>
    </location>
</feature>
<feature type="modified residue" description="Phosphoserine" evidence="1">
    <location>
        <position position="94"/>
    </location>
</feature>
<feature type="modified residue" description="Phosphoserine" evidence="1">
    <location>
        <position position="116"/>
    </location>
</feature>
<feature type="modified residue" description="Phosphoserine" evidence="1">
    <location>
        <position position="118"/>
    </location>
</feature>
<feature type="modified residue" description="Phosphoserine" evidence="1">
    <location>
        <position position="132"/>
    </location>
</feature>
<feature type="modified residue" description="Phosphoserine" evidence="1">
    <location>
        <position position="133"/>
    </location>
</feature>
<feature type="modified residue" description="Phosphothreonine" evidence="1">
    <location>
        <position position="267"/>
    </location>
</feature>
<feature type="modified residue" description="Phosphoserine" evidence="1">
    <location>
        <position position="361"/>
    </location>
</feature>
<feature type="modified residue" description="Phosphoserine" evidence="1">
    <location>
        <position position="432"/>
    </location>
</feature>
<feature type="cross-link" description="Glycyl lysine isopeptide (Lys-Gly) (interchain with G-Cter in SUMO2)" evidence="1">
    <location>
        <position position="67"/>
    </location>
</feature>
<feature type="cross-link" description="Glycyl lysine isopeptide (Lys-Gly) (interchain with G-Cter in SUMO2)" evidence="1">
    <location>
        <position position="249"/>
    </location>
</feature>
<feature type="cross-link" description="Glycyl lysine isopeptide (Lys-Gly) (interchain with G-Cter in SUMO2)" evidence="1">
    <location>
        <position position="357"/>
    </location>
</feature>
<feature type="cross-link" description="Glycyl lysine isopeptide (Lys-Gly) (interchain with G-Cter in SUMO2)" evidence="1">
    <location>
        <position position="371"/>
    </location>
</feature>
<feature type="cross-link" description="Glycyl lysine isopeptide (Lys-Gly) (interchain with G-Cter in SUMO2)" evidence="1">
    <location>
        <position position="381"/>
    </location>
</feature>
<feature type="cross-link" description="Glycyl lysine isopeptide (Lys-Gly) (interchain with G-Cter in SUMO2)" evidence="1">
    <location>
        <position position="415"/>
    </location>
</feature>
<feature type="cross-link" description="Glycyl lysine isopeptide (Lys-Gly) (interchain with G-Cter in SUMO2)" evidence="1">
    <location>
        <position position="418"/>
    </location>
</feature>
<comment type="function">
    <text evidence="1">Involved in pre-mRNA splicing as a component of the spliceosome.</text>
</comment>
<comment type="subunit">
    <text evidence="1">Component of the spliceosome B complex. Interacts with PRPF38A (via N-terminal interaction domain).</text>
</comment>
<comment type="subcellular location">
    <subcellularLocation>
        <location evidence="1">Nucleus</location>
    </subcellularLocation>
</comment>
<comment type="similarity">
    <text evidence="3">Belongs to the MFAP1 family.</text>
</comment>
<organism>
    <name type="scientific">Bos taurus</name>
    <name type="common">Bovine</name>
    <dbReference type="NCBI Taxonomy" id="9913"/>
    <lineage>
        <taxon>Eukaryota</taxon>
        <taxon>Metazoa</taxon>
        <taxon>Chordata</taxon>
        <taxon>Craniata</taxon>
        <taxon>Vertebrata</taxon>
        <taxon>Euteleostomi</taxon>
        <taxon>Mammalia</taxon>
        <taxon>Eutheria</taxon>
        <taxon>Laurasiatheria</taxon>
        <taxon>Artiodactyla</taxon>
        <taxon>Ruminantia</taxon>
        <taxon>Pecora</taxon>
        <taxon>Bovidae</taxon>
        <taxon>Bovinae</taxon>
        <taxon>Bos</taxon>
    </lineage>
</organism>
<evidence type="ECO:0000250" key="1">
    <source>
        <dbReference type="UniProtKB" id="P55081"/>
    </source>
</evidence>
<evidence type="ECO:0000256" key="2">
    <source>
        <dbReference type="SAM" id="MobiDB-lite"/>
    </source>
</evidence>
<evidence type="ECO:0000305" key="3"/>
<protein>
    <recommendedName>
        <fullName evidence="1">Microfibrillar-associated protein 1</fullName>
    </recommendedName>
    <alternativeName>
        <fullName evidence="1">Spliceosome B complex protein MFAP1</fullName>
    </alternativeName>
</protein>